<reference key="1">
    <citation type="journal article" date="2002" name="Proc. Natl. Acad. Sci. U.S.A.">
        <title>Genome sequence and comparative microarray analysis of serotype M18 group A Streptococcus strains associated with acute rheumatic fever outbreaks.</title>
        <authorList>
            <person name="Smoot J.C."/>
            <person name="Barbian K.D."/>
            <person name="Van Gompel J.J."/>
            <person name="Smoot L.M."/>
            <person name="Chaussee M.S."/>
            <person name="Sylva G.L."/>
            <person name="Sturdevant D.E."/>
            <person name="Ricklefs S.M."/>
            <person name="Porcella S.F."/>
            <person name="Parkins L.D."/>
            <person name="Beres S.B."/>
            <person name="Campbell D.S."/>
            <person name="Smith T.M."/>
            <person name="Zhang Q."/>
            <person name="Kapur V."/>
            <person name="Daly J.A."/>
            <person name="Veasy L.G."/>
            <person name="Musser J.M."/>
        </authorList>
    </citation>
    <scope>NUCLEOTIDE SEQUENCE [LARGE SCALE GENOMIC DNA]</scope>
    <source>
        <strain>MGAS8232</strain>
    </source>
</reference>
<dbReference type="EC" id="2.7.1.33"/>
<dbReference type="EMBL" id="AE009949">
    <property type="protein sequence ID" value="AAL97799.1"/>
    <property type="molecule type" value="Genomic_DNA"/>
</dbReference>
<dbReference type="RefSeq" id="WP_011017810.1">
    <property type="nucleotide sequence ID" value="NC_003485.1"/>
</dbReference>
<dbReference type="SMR" id="Q8P0V9"/>
<dbReference type="KEGG" id="spm:spyM18_1183"/>
<dbReference type="HOGENOM" id="CLU_053818_1_1_9"/>
<dbReference type="UniPathway" id="UPA00241">
    <property type="reaction ID" value="UER00352"/>
</dbReference>
<dbReference type="GO" id="GO:0005737">
    <property type="term" value="C:cytoplasm"/>
    <property type="evidence" value="ECO:0007669"/>
    <property type="project" value="UniProtKB-SubCell"/>
</dbReference>
<dbReference type="GO" id="GO:0005524">
    <property type="term" value="F:ATP binding"/>
    <property type="evidence" value="ECO:0007669"/>
    <property type="project" value="UniProtKB-UniRule"/>
</dbReference>
<dbReference type="GO" id="GO:0004594">
    <property type="term" value="F:pantothenate kinase activity"/>
    <property type="evidence" value="ECO:0007669"/>
    <property type="project" value="UniProtKB-UniRule"/>
</dbReference>
<dbReference type="GO" id="GO:0015937">
    <property type="term" value="P:coenzyme A biosynthetic process"/>
    <property type="evidence" value="ECO:0007669"/>
    <property type="project" value="UniProtKB-UniRule"/>
</dbReference>
<dbReference type="CDD" id="cd02025">
    <property type="entry name" value="PanK"/>
    <property type="match status" value="1"/>
</dbReference>
<dbReference type="Gene3D" id="3.40.50.300">
    <property type="entry name" value="P-loop containing nucleotide triphosphate hydrolases"/>
    <property type="match status" value="1"/>
</dbReference>
<dbReference type="HAMAP" id="MF_00215">
    <property type="entry name" value="Pantothen_kinase_1"/>
    <property type="match status" value="1"/>
</dbReference>
<dbReference type="InterPro" id="IPR027417">
    <property type="entry name" value="P-loop_NTPase"/>
</dbReference>
<dbReference type="InterPro" id="IPR004566">
    <property type="entry name" value="PanK"/>
</dbReference>
<dbReference type="InterPro" id="IPR006083">
    <property type="entry name" value="PRK/URK"/>
</dbReference>
<dbReference type="NCBIfam" id="TIGR00554">
    <property type="entry name" value="panK_bact"/>
    <property type="match status" value="1"/>
</dbReference>
<dbReference type="PANTHER" id="PTHR10285">
    <property type="entry name" value="URIDINE KINASE"/>
    <property type="match status" value="1"/>
</dbReference>
<dbReference type="Pfam" id="PF00485">
    <property type="entry name" value="PRK"/>
    <property type="match status" value="1"/>
</dbReference>
<dbReference type="PIRSF" id="PIRSF000545">
    <property type="entry name" value="Pantothenate_kin"/>
    <property type="match status" value="1"/>
</dbReference>
<dbReference type="SUPFAM" id="SSF52540">
    <property type="entry name" value="P-loop containing nucleoside triphosphate hydrolases"/>
    <property type="match status" value="1"/>
</dbReference>
<feature type="chain" id="PRO_0000194459" description="Pantothenate kinase">
    <location>
        <begin position="1"/>
        <end position="306"/>
    </location>
</feature>
<feature type="binding site" evidence="2">
    <location>
        <begin position="91"/>
        <end position="98"/>
    </location>
    <ligand>
        <name>ATP</name>
        <dbReference type="ChEBI" id="CHEBI:30616"/>
    </ligand>
</feature>
<proteinExistence type="inferred from homology"/>
<name>COAA_STRP8</name>
<protein>
    <recommendedName>
        <fullName>Pantothenate kinase</fullName>
        <ecNumber>2.7.1.33</ecNumber>
    </recommendedName>
    <alternativeName>
        <fullName>Pantothenic acid kinase</fullName>
    </alternativeName>
</protein>
<comment type="catalytic activity">
    <reaction>
        <text>(R)-pantothenate + ATP = (R)-4'-phosphopantothenate + ADP + H(+)</text>
        <dbReference type="Rhea" id="RHEA:16373"/>
        <dbReference type="ChEBI" id="CHEBI:10986"/>
        <dbReference type="ChEBI" id="CHEBI:15378"/>
        <dbReference type="ChEBI" id="CHEBI:29032"/>
        <dbReference type="ChEBI" id="CHEBI:30616"/>
        <dbReference type="ChEBI" id="CHEBI:456216"/>
        <dbReference type="EC" id="2.7.1.33"/>
    </reaction>
</comment>
<comment type="pathway">
    <text>Cofactor biosynthesis; coenzyme A biosynthesis; CoA from (R)-pantothenate: step 1/5.</text>
</comment>
<comment type="subcellular location">
    <subcellularLocation>
        <location evidence="1">Cytoplasm</location>
    </subcellularLocation>
</comment>
<comment type="similarity">
    <text evidence="3">Belongs to the prokaryotic pantothenate kinase family.</text>
</comment>
<organism>
    <name type="scientific">Streptococcus pyogenes serotype M18 (strain MGAS8232)</name>
    <dbReference type="NCBI Taxonomy" id="186103"/>
    <lineage>
        <taxon>Bacteria</taxon>
        <taxon>Bacillati</taxon>
        <taxon>Bacillota</taxon>
        <taxon>Bacilli</taxon>
        <taxon>Lactobacillales</taxon>
        <taxon>Streptococcaceae</taxon>
        <taxon>Streptococcus</taxon>
    </lineage>
</organism>
<gene>
    <name type="primary">coaA</name>
    <name type="ordered locus">spyM18_1183</name>
</gene>
<keyword id="KW-0067">ATP-binding</keyword>
<keyword id="KW-0173">Coenzyme A biosynthesis</keyword>
<keyword id="KW-0963">Cytoplasm</keyword>
<keyword id="KW-0418">Kinase</keyword>
<keyword id="KW-0547">Nucleotide-binding</keyword>
<keyword id="KW-0808">Transferase</keyword>
<evidence type="ECO:0000250" key="1"/>
<evidence type="ECO:0000255" key="2"/>
<evidence type="ECO:0000305" key="3"/>
<sequence>MSNEFINFEKISRESWKTLHQKAKALLTQEELKSITSLNDNISINDVIDIYLPLINLIQVYKIAQENLSFSKSLFLKKDIQLRPFIIGISGSVAVGKSTTSRLLQLLLSRTHSNSQVELVTTDGFLYPNQFLIEQGLLNRKGFPESYNMELLLDFLDSIKNGQTAFAPVYSHDIYDIIPNQKQSFNNPDFLIVEGINVFQNQQNNRLYMSDYFDFSIYIDADSSHIETWYIERFLSILKLAKRDPHNYYAQYAQLPRSEAIAFARNVWKTVNLENLEKFIEPTRNRAELILHKSADHKIDEIYLKK</sequence>
<accession>Q8P0V9</accession>